<evidence type="ECO:0000250" key="1"/>
<evidence type="ECO:0000255" key="2"/>
<evidence type="ECO:0000255" key="3">
    <source>
        <dbReference type="PROSITE-ProRule" id="PRU10039"/>
    </source>
</evidence>
<evidence type="ECO:0000269" key="4">
    <source>
    </source>
</evidence>
<evidence type="ECO:0000305" key="5"/>
<sequence>MKNTCGILLNLFLFIGCFLTCSASNTPKVQVHSGEIAGGFEYTYNGRKIYSFLGIPYASPPVQNNRFKEPQPVQPWLGVWNATVPGSACLGIEFGSGSKIIGQEDCLFLNVYTPKLPQENSAGDLMNVIVHIHGGGYYFGEGILYGPHYLLDNNDFVYVSINYRLGVLGFASTGDGVLPGNNGLKDQVAALKWIQQNIVAFGGDPNSVTITGMSAGASSVHNHLISPMSKGLFNRAIIQSGSAFCHWSTAENVAQKTKYIANLLGCPTNNSVEIVECLRSRPAKAIAKSYLNFMPWRNFPFTPFGPTVEVAGYEKFLPDIPEKLVPHDIPVLISIAQDEGLIFSTFLGLENGFNELNNNWNEHLPHILDYNYTISNENLRFKTAQDIKEFYFGDKPISKETKSNLSKMISDRSFGYGTSKAAQHIAAKNTAPVYFYEFGYSGNYSYVAFFDPKSYSRGSSPTHGDETNYVLKVDGFTVYDNEEDRKMIKTMVNIWATFIKSGVPDTENSEIWLPVSKNPADLFRFTKITQQQTFEAREQSTMAIMNFGVAYHYQNILNLMCQMT</sequence>
<reference key="1">
    <citation type="journal article" date="1993" name="Biochem. J.">
        <title>Cloning and analysis of the esterase genes conferring insecticide resistance in the peach-potato aphid, Myzus persicae (Sulzer).</title>
        <authorList>
            <person name="Field L.M."/>
            <person name="Williamson M.S."/>
            <person name="Moores G.D."/>
            <person name="Devonshire A.L."/>
        </authorList>
    </citation>
    <scope>NUCLEOTIDE SEQUENCE [MRNA]</scope>
    <scope>PROTEIN SEQUENCE OF 24-63</scope>
    <source>
        <strain>Isolate 800F</strain>
    </source>
</reference>
<dbReference type="EC" id="3.1.1.1"/>
<dbReference type="EMBL" id="X74555">
    <property type="protein sequence ID" value="CAA52649.1"/>
    <property type="molecule type" value="mRNA"/>
</dbReference>
<dbReference type="PIR" id="S36787">
    <property type="entry name" value="S36787"/>
</dbReference>
<dbReference type="SMR" id="P35502"/>
<dbReference type="ESTHER" id="myzpe-estf4">
    <property type="family name" value="Carb_B_Arthropoda"/>
</dbReference>
<dbReference type="MEROPS" id="S09.980"/>
<dbReference type="OrthoDB" id="6846267at2759"/>
<dbReference type="GO" id="GO:0106435">
    <property type="term" value="F:carboxylesterase activity"/>
    <property type="evidence" value="ECO:0007669"/>
    <property type="project" value="UniProtKB-EC"/>
</dbReference>
<dbReference type="CDD" id="cd00312">
    <property type="entry name" value="Esterase_lipase"/>
    <property type="match status" value="1"/>
</dbReference>
<dbReference type="Gene3D" id="3.40.50.1820">
    <property type="entry name" value="alpha/beta hydrolase"/>
    <property type="match status" value="1"/>
</dbReference>
<dbReference type="InterPro" id="IPR029058">
    <property type="entry name" value="AB_hydrolase_fold"/>
</dbReference>
<dbReference type="InterPro" id="IPR002018">
    <property type="entry name" value="CarbesteraseB"/>
</dbReference>
<dbReference type="InterPro" id="IPR019826">
    <property type="entry name" value="Carboxylesterase_B_AS"/>
</dbReference>
<dbReference type="InterPro" id="IPR019819">
    <property type="entry name" value="Carboxylesterase_B_CS"/>
</dbReference>
<dbReference type="InterPro" id="IPR050309">
    <property type="entry name" value="Type-B_Carboxylest/Lipase"/>
</dbReference>
<dbReference type="PANTHER" id="PTHR11559">
    <property type="entry name" value="CARBOXYLESTERASE"/>
    <property type="match status" value="1"/>
</dbReference>
<dbReference type="Pfam" id="PF00135">
    <property type="entry name" value="COesterase"/>
    <property type="match status" value="1"/>
</dbReference>
<dbReference type="SUPFAM" id="SSF53474">
    <property type="entry name" value="alpha/beta-Hydrolases"/>
    <property type="match status" value="1"/>
</dbReference>
<dbReference type="PROSITE" id="PS00122">
    <property type="entry name" value="CARBOXYLESTERASE_B_1"/>
    <property type="match status" value="1"/>
</dbReference>
<dbReference type="PROSITE" id="PS00941">
    <property type="entry name" value="CARBOXYLESTERASE_B_2"/>
    <property type="match status" value="1"/>
</dbReference>
<feature type="signal peptide" evidence="4">
    <location>
        <begin position="1"/>
        <end position="23"/>
    </location>
</feature>
<feature type="chain" id="PRO_0000008567" description="Esterase FE4">
    <location>
        <begin position="24"/>
        <end position="564"/>
    </location>
</feature>
<feature type="active site" description="Acyl-ester intermediate" evidence="3">
    <location>
        <position position="214"/>
    </location>
</feature>
<feature type="active site" description="Charge relay system" evidence="1">
    <location>
        <position position="339"/>
    </location>
</feature>
<feature type="active site" description="Charge relay system" evidence="1">
    <location>
        <position position="463"/>
    </location>
</feature>
<feature type="glycosylation site" description="N-linked (GlcNAc...) asparagine" evidence="2">
    <location>
        <position position="81"/>
    </location>
</feature>
<feature type="glycosylation site" description="N-linked (GlcNAc...) asparagine" evidence="2">
    <location>
        <position position="269"/>
    </location>
</feature>
<feature type="glycosylation site" description="N-linked (GlcNAc...) asparagine" evidence="2">
    <location>
        <position position="371"/>
    </location>
</feature>
<feature type="glycosylation site" description="N-linked (GlcNAc...) asparagine" evidence="2">
    <location>
        <position position="404"/>
    </location>
</feature>
<feature type="glycosylation site" description="N-linked (GlcNAc...) asparagine" evidence="2">
    <location>
        <position position="443"/>
    </location>
</feature>
<feature type="disulfide bond" evidence="1">
    <location>
        <begin position="89"/>
        <end position="106"/>
    </location>
</feature>
<feature type="disulfide bond" evidence="1">
    <location>
        <begin position="266"/>
        <end position="277"/>
    </location>
</feature>
<comment type="function">
    <text>Overproduction of nonspecific esterases is a common mechanism of resistance to organophosphate insecticides.</text>
</comment>
<comment type="catalytic activity">
    <reaction evidence="3">
        <text>a carboxylic ester + H2O = an alcohol + a carboxylate + H(+)</text>
        <dbReference type="Rhea" id="RHEA:21164"/>
        <dbReference type="ChEBI" id="CHEBI:15377"/>
        <dbReference type="ChEBI" id="CHEBI:15378"/>
        <dbReference type="ChEBI" id="CHEBI:29067"/>
        <dbReference type="ChEBI" id="CHEBI:30879"/>
        <dbReference type="ChEBI" id="CHEBI:33308"/>
        <dbReference type="EC" id="3.1.1.1"/>
    </reaction>
</comment>
<comment type="miscellaneous">
    <text>This esterase confers insecticide resistance.</text>
</comment>
<comment type="similarity">
    <text evidence="5">Belongs to the type-B carboxylesterase/lipase family.</text>
</comment>
<name>ESTF_MYZPE</name>
<protein>
    <recommendedName>
        <fullName>Esterase FE4</fullName>
        <ecNumber>3.1.1.1</ecNumber>
    </recommendedName>
    <alternativeName>
        <fullName>Carboxylic-ester hydrolase</fullName>
    </alternativeName>
</protein>
<accession>P35502</accession>
<proteinExistence type="evidence at protein level"/>
<organism>
    <name type="scientific">Myzus persicae</name>
    <name type="common">Green peach aphid</name>
    <name type="synonym">Aphis persicae</name>
    <dbReference type="NCBI Taxonomy" id="13164"/>
    <lineage>
        <taxon>Eukaryota</taxon>
        <taxon>Metazoa</taxon>
        <taxon>Ecdysozoa</taxon>
        <taxon>Arthropoda</taxon>
        <taxon>Hexapoda</taxon>
        <taxon>Insecta</taxon>
        <taxon>Pterygota</taxon>
        <taxon>Neoptera</taxon>
        <taxon>Paraneoptera</taxon>
        <taxon>Hemiptera</taxon>
        <taxon>Sternorrhyncha</taxon>
        <taxon>Aphidomorpha</taxon>
        <taxon>Aphidoidea</taxon>
        <taxon>Aphididae</taxon>
        <taxon>Macrosiphini</taxon>
        <taxon>Myzus</taxon>
    </lineage>
</organism>
<keyword id="KW-0903">Direct protein sequencing</keyword>
<keyword id="KW-1015">Disulfide bond</keyword>
<keyword id="KW-0325">Glycoprotein</keyword>
<keyword id="KW-0378">Hydrolase</keyword>
<keyword id="KW-0719">Serine esterase</keyword>
<keyword id="KW-0732">Signal</keyword>